<sequence length="302" mass="34354">MTEQFDKTYCGFIAIVGRPNVGKSTLLNKILGQKISITSRKAQTTRHRIVGIKTEGAYQEIYVDTPGLHIEEKRAINRLMNRAASSAIGDVDLIIFVVDGTHWNADDEMVLNKLRNAKAPVVLAINKVDNIKNKDDLLPFITDLSSKFNFAHIVPISAQRGNNVHELEKIVRQSLREGVHHFPEDYVTDRSQRFMASEIIREKLMRFTGEELPYSVTVEIEQFKVNERGTYEINGLILVEREGQKKMVIGAGGQKIKTIGMEARADMERLFDNKVHLELWVKVKSGWADDERALRSLGYMDE</sequence>
<keyword id="KW-0997">Cell inner membrane</keyword>
<keyword id="KW-1003">Cell membrane</keyword>
<keyword id="KW-0963">Cytoplasm</keyword>
<keyword id="KW-0342">GTP-binding</keyword>
<keyword id="KW-0472">Membrane</keyword>
<keyword id="KW-0547">Nucleotide-binding</keyword>
<keyword id="KW-0690">Ribosome biogenesis</keyword>
<keyword id="KW-0694">RNA-binding</keyword>
<keyword id="KW-0699">rRNA-binding</keyword>
<organism>
    <name type="scientific">Haemophilus influenzae (strain PittGG)</name>
    <dbReference type="NCBI Taxonomy" id="374931"/>
    <lineage>
        <taxon>Bacteria</taxon>
        <taxon>Pseudomonadati</taxon>
        <taxon>Pseudomonadota</taxon>
        <taxon>Gammaproteobacteria</taxon>
        <taxon>Pasteurellales</taxon>
        <taxon>Pasteurellaceae</taxon>
        <taxon>Haemophilus</taxon>
    </lineage>
</organism>
<gene>
    <name evidence="1" type="primary">era</name>
    <name type="ordered locus">CGSHiGG_02525</name>
</gene>
<name>ERA_HAEIG</name>
<protein>
    <recommendedName>
        <fullName evidence="1">GTPase Era</fullName>
    </recommendedName>
</protein>
<dbReference type="EMBL" id="CP000672">
    <property type="protein sequence ID" value="ABQ99542.1"/>
    <property type="status" value="ALT_FRAME"/>
    <property type="molecule type" value="Genomic_DNA"/>
</dbReference>
<dbReference type="SMR" id="A5UFI7"/>
<dbReference type="KEGG" id="hiq:CGSHiGG_02525"/>
<dbReference type="HOGENOM" id="CLU_038009_1_2_6"/>
<dbReference type="Proteomes" id="UP000001990">
    <property type="component" value="Chromosome"/>
</dbReference>
<dbReference type="GO" id="GO:0005829">
    <property type="term" value="C:cytosol"/>
    <property type="evidence" value="ECO:0007669"/>
    <property type="project" value="TreeGrafter"/>
</dbReference>
<dbReference type="GO" id="GO:0005886">
    <property type="term" value="C:plasma membrane"/>
    <property type="evidence" value="ECO:0007669"/>
    <property type="project" value="UniProtKB-SubCell"/>
</dbReference>
<dbReference type="GO" id="GO:0005525">
    <property type="term" value="F:GTP binding"/>
    <property type="evidence" value="ECO:0007669"/>
    <property type="project" value="UniProtKB-UniRule"/>
</dbReference>
<dbReference type="GO" id="GO:0003924">
    <property type="term" value="F:GTPase activity"/>
    <property type="evidence" value="ECO:0007669"/>
    <property type="project" value="UniProtKB-UniRule"/>
</dbReference>
<dbReference type="GO" id="GO:0043024">
    <property type="term" value="F:ribosomal small subunit binding"/>
    <property type="evidence" value="ECO:0007669"/>
    <property type="project" value="TreeGrafter"/>
</dbReference>
<dbReference type="GO" id="GO:0070181">
    <property type="term" value="F:small ribosomal subunit rRNA binding"/>
    <property type="evidence" value="ECO:0007669"/>
    <property type="project" value="UniProtKB-UniRule"/>
</dbReference>
<dbReference type="GO" id="GO:0000028">
    <property type="term" value="P:ribosomal small subunit assembly"/>
    <property type="evidence" value="ECO:0007669"/>
    <property type="project" value="TreeGrafter"/>
</dbReference>
<dbReference type="CDD" id="cd04163">
    <property type="entry name" value="Era"/>
    <property type="match status" value="1"/>
</dbReference>
<dbReference type="CDD" id="cd22534">
    <property type="entry name" value="KH-II_Era"/>
    <property type="match status" value="1"/>
</dbReference>
<dbReference type="FunFam" id="3.30.300.20:FF:000003">
    <property type="entry name" value="GTPase Era"/>
    <property type="match status" value="1"/>
</dbReference>
<dbReference type="FunFam" id="3.40.50.300:FF:000094">
    <property type="entry name" value="GTPase Era"/>
    <property type="match status" value="1"/>
</dbReference>
<dbReference type="Gene3D" id="3.30.300.20">
    <property type="match status" value="1"/>
</dbReference>
<dbReference type="Gene3D" id="3.40.50.300">
    <property type="entry name" value="P-loop containing nucleotide triphosphate hydrolases"/>
    <property type="match status" value="1"/>
</dbReference>
<dbReference type="HAMAP" id="MF_00367">
    <property type="entry name" value="GTPase_Era"/>
    <property type="match status" value="1"/>
</dbReference>
<dbReference type="InterPro" id="IPR030388">
    <property type="entry name" value="G_ERA_dom"/>
</dbReference>
<dbReference type="InterPro" id="IPR006073">
    <property type="entry name" value="GTP-bd"/>
</dbReference>
<dbReference type="InterPro" id="IPR005662">
    <property type="entry name" value="GTPase_Era-like"/>
</dbReference>
<dbReference type="InterPro" id="IPR015946">
    <property type="entry name" value="KH_dom-like_a/b"/>
</dbReference>
<dbReference type="InterPro" id="IPR004044">
    <property type="entry name" value="KH_dom_type_2"/>
</dbReference>
<dbReference type="InterPro" id="IPR009019">
    <property type="entry name" value="KH_sf_prok-type"/>
</dbReference>
<dbReference type="InterPro" id="IPR027417">
    <property type="entry name" value="P-loop_NTPase"/>
</dbReference>
<dbReference type="InterPro" id="IPR005225">
    <property type="entry name" value="Small_GTP-bd"/>
</dbReference>
<dbReference type="NCBIfam" id="TIGR00436">
    <property type="entry name" value="era"/>
    <property type="match status" value="1"/>
</dbReference>
<dbReference type="NCBIfam" id="NF000908">
    <property type="entry name" value="PRK00089.1"/>
    <property type="match status" value="1"/>
</dbReference>
<dbReference type="NCBIfam" id="TIGR00231">
    <property type="entry name" value="small_GTP"/>
    <property type="match status" value="1"/>
</dbReference>
<dbReference type="PANTHER" id="PTHR42698">
    <property type="entry name" value="GTPASE ERA"/>
    <property type="match status" value="1"/>
</dbReference>
<dbReference type="PANTHER" id="PTHR42698:SF1">
    <property type="entry name" value="GTPASE ERA, MITOCHONDRIAL"/>
    <property type="match status" value="1"/>
</dbReference>
<dbReference type="Pfam" id="PF07650">
    <property type="entry name" value="KH_2"/>
    <property type="match status" value="1"/>
</dbReference>
<dbReference type="Pfam" id="PF01926">
    <property type="entry name" value="MMR_HSR1"/>
    <property type="match status" value="1"/>
</dbReference>
<dbReference type="PRINTS" id="PR00326">
    <property type="entry name" value="GTP1OBG"/>
</dbReference>
<dbReference type="SUPFAM" id="SSF52540">
    <property type="entry name" value="P-loop containing nucleoside triphosphate hydrolases"/>
    <property type="match status" value="1"/>
</dbReference>
<dbReference type="SUPFAM" id="SSF54814">
    <property type="entry name" value="Prokaryotic type KH domain (KH-domain type II)"/>
    <property type="match status" value="1"/>
</dbReference>
<dbReference type="PROSITE" id="PS51713">
    <property type="entry name" value="G_ERA"/>
    <property type="match status" value="1"/>
</dbReference>
<dbReference type="PROSITE" id="PS50823">
    <property type="entry name" value="KH_TYPE_2"/>
    <property type="match status" value="1"/>
</dbReference>
<evidence type="ECO:0000255" key="1">
    <source>
        <dbReference type="HAMAP-Rule" id="MF_00367"/>
    </source>
</evidence>
<evidence type="ECO:0000255" key="2">
    <source>
        <dbReference type="PROSITE-ProRule" id="PRU01050"/>
    </source>
</evidence>
<evidence type="ECO:0000305" key="3"/>
<accession>A5UFI7</accession>
<proteinExistence type="inferred from homology"/>
<reference key="1">
    <citation type="journal article" date="2007" name="Genome Biol.">
        <title>Characterization and modeling of the Haemophilus influenzae core and supragenomes based on the complete genomic sequences of Rd and 12 clinical nontypeable strains.</title>
        <authorList>
            <person name="Hogg J.S."/>
            <person name="Hu F.Z."/>
            <person name="Janto B."/>
            <person name="Boissy R."/>
            <person name="Hayes J."/>
            <person name="Keefe R."/>
            <person name="Post J.C."/>
            <person name="Ehrlich G.D."/>
        </authorList>
    </citation>
    <scope>NUCLEOTIDE SEQUENCE [LARGE SCALE GENOMIC DNA]</scope>
    <source>
        <strain>PittGG</strain>
    </source>
</reference>
<feature type="chain" id="PRO_0000403968" description="GTPase Era">
    <location>
        <begin position="1"/>
        <end position="302"/>
    </location>
</feature>
<feature type="domain" description="Era-type G" evidence="2">
    <location>
        <begin position="9"/>
        <end position="177"/>
    </location>
</feature>
<feature type="domain" description="KH type-2" evidence="1">
    <location>
        <begin position="208"/>
        <end position="285"/>
    </location>
</feature>
<feature type="region of interest" description="G1" evidence="2">
    <location>
        <begin position="17"/>
        <end position="24"/>
    </location>
</feature>
<feature type="region of interest" description="G2" evidence="2">
    <location>
        <begin position="43"/>
        <end position="47"/>
    </location>
</feature>
<feature type="region of interest" description="G3" evidence="2">
    <location>
        <begin position="64"/>
        <end position="67"/>
    </location>
</feature>
<feature type="region of interest" description="G4" evidence="2">
    <location>
        <begin position="126"/>
        <end position="129"/>
    </location>
</feature>
<feature type="region of interest" description="G5" evidence="2">
    <location>
        <begin position="156"/>
        <end position="158"/>
    </location>
</feature>
<feature type="binding site" evidence="1">
    <location>
        <begin position="17"/>
        <end position="24"/>
    </location>
    <ligand>
        <name>GTP</name>
        <dbReference type="ChEBI" id="CHEBI:37565"/>
    </ligand>
</feature>
<feature type="binding site" evidence="1">
    <location>
        <begin position="64"/>
        <end position="68"/>
    </location>
    <ligand>
        <name>GTP</name>
        <dbReference type="ChEBI" id="CHEBI:37565"/>
    </ligand>
</feature>
<feature type="binding site" evidence="1">
    <location>
        <begin position="126"/>
        <end position="129"/>
    </location>
    <ligand>
        <name>GTP</name>
        <dbReference type="ChEBI" id="CHEBI:37565"/>
    </ligand>
</feature>
<comment type="function">
    <text evidence="1">An essential GTPase that binds both GDP and GTP, with rapid nucleotide exchange. Plays a role in 16S rRNA processing and 30S ribosomal subunit biogenesis and possibly also in cell cycle regulation and energy metabolism.</text>
</comment>
<comment type="subunit">
    <text evidence="1">Monomer.</text>
</comment>
<comment type="subcellular location">
    <subcellularLocation>
        <location>Cytoplasm</location>
    </subcellularLocation>
    <subcellularLocation>
        <location evidence="1">Cell inner membrane</location>
        <topology evidence="1">Peripheral membrane protein</topology>
    </subcellularLocation>
</comment>
<comment type="similarity">
    <text evidence="1 2">Belongs to the TRAFAC class TrmE-Era-EngA-EngB-Septin-like GTPase superfamily. Era GTPase family.</text>
</comment>
<comment type="sequence caution" evidence="3">
    <conflict type="frameshift">
        <sequence resource="EMBL-CDS" id="ABQ99542"/>
    </conflict>
</comment>